<reference key="1">
    <citation type="journal article" date="2004" name="Nature">
        <title>Genome evolution in yeasts.</title>
        <authorList>
            <person name="Dujon B."/>
            <person name="Sherman D."/>
            <person name="Fischer G."/>
            <person name="Durrens P."/>
            <person name="Casaregola S."/>
            <person name="Lafontaine I."/>
            <person name="de Montigny J."/>
            <person name="Marck C."/>
            <person name="Neuveglise C."/>
            <person name="Talla E."/>
            <person name="Goffard N."/>
            <person name="Frangeul L."/>
            <person name="Aigle M."/>
            <person name="Anthouard V."/>
            <person name="Babour A."/>
            <person name="Barbe V."/>
            <person name="Barnay S."/>
            <person name="Blanchin S."/>
            <person name="Beckerich J.-M."/>
            <person name="Beyne E."/>
            <person name="Bleykasten C."/>
            <person name="Boisrame A."/>
            <person name="Boyer J."/>
            <person name="Cattolico L."/>
            <person name="Confanioleri F."/>
            <person name="de Daruvar A."/>
            <person name="Despons L."/>
            <person name="Fabre E."/>
            <person name="Fairhead C."/>
            <person name="Ferry-Dumazet H."/>
            <person name="Groppi A."/>
            <person name="Hantraye F."/>
            <person name="Hennequin C."/>
            <person name="Jauniaux N."/>
            <person name="Joyet P."/>
            <person name="Kachouri R."/>
            <person name="Kerrest A."/>
            <person name="Koszul R."/>
            <person name="Lemaire M."/>
            <person name="Lesur I."/>
            <person name="Ma L."/>
            <person name="Muller H."/>
            <person name="Nicaud J.-M."/>
            <person name="Nikolski M."/>
            <person name="Oztas S."/>
            <person name="Ozier-Kalogeropoulos O."/>
            <person name="Pellenz S."/>
            <person name="Potier S."/>
            <person name="Richard G.-F."/>
            <person name="Straub M.-L."/>
            <person name="Suleau A."/>
            <person name="Swennen D."/>
            <person name="Tekaia F."/>
            <person name="Wesolowski-Louvel M."/>
            <person name="Westhof E."/>
            <person name="Wirth B."/>
            <person name="Zeniou-Meyer M."/>
            <person name="Zivanovic Y."/>
            <person name="Bolotin-Fukuhara M."/>
            <person name="Thierry A."/>
            <person name="Bouchier C."/>
            <person name="Caudron B."/>
            <person name="Scarpelli C."/>
            <person name="Gaillardin C."/>
            <person name="Weissenbach J."/>
            <person name="Wincker P."/>
            <person name="Souciet J.-L."/>
        </authorList>
    </citation>
    <scope>NUCLEOTIDE SEQUENCE [LARGE SCALE GENOMIC DNA]</scope>
    <source>
        <strain>ATCC 8585 / CBS 2359 / DSM 70799 / NBRC 1267 / NRRL Y-1140 / WM37</strain>
    </source>
</reference>
<reference key="2">
    <citation type="journal article" date="2000" name="Yeast">
        <title>The ubiquitin-encoding genes of Kluyveromyces lactis.</title>
        <authorList>
            <person name="Bao W.-G."/>
            <person name="Fukuhara H."/>
        </authorList>
    </citation>
    <scope>NUCLEOTIDE SEQUENCE [GENOMIC DNA] OF 157-283</scope>
    <source>
        <strain>ATCC 76492 / CBS 2359/152 / CLIB 210</strain>
    </source>
</reference>
<accession>Q6CQB7</accession>
<accession>Q9Y851</accession>
<comment type="function">
    <text evidence="1">Involved in cation homeostasis and in the regulation of the cation stress signaling cascades.</text>
</comment>
<comment type="subcellular location">
    <subcellularLocation>
        <location evidence="1">Cytoplasm</location>
    </subcellularLocation>
    <subcellularLocation>
        <location evidence="1">Nucleus</location>
    </subcellularLocation>
</comment>
<keyword id="KW-0963">Cytoplasm</keyword>
<keyword id="KW-0539">Nucleus</keyword>
<keyword id="KW-1185">Reference proteome</keyword>
<name>LIC4_KLULA</name>
<proteinExistence type="inferred from homology"/>
<feature type="chain" id="PRO_0000076238" description="Protein ATC1/LIC4">
    <location>
        <begin position="1"/>
        <end position="283"/>
    </location>
</feature>
<feature type="region of interest" description="Disordered" evidence="2">
    <location>
        <begin position="148"/>
        <end position="174"/>
    </location>
</feature>
<feature type="compositionally biased region" description="Polar residues" evidence="2">
    <location>
        <begin position="157"/>
        <end position="174"/>
    </location>
</feature>
<dbReference type="EMBL" id="CR382124">
    <property type="protein sequence ID" value="CAH00968.1"/>
    <property type="molecule type" value="Genomic_DNA"/>
</dbReference>
<dbReference type="EMBL" id="AJ243802">
    <property type="protein sequence ID" value="CAB50895.1"/>
    <property type="molecule type" value="Genomic_DNA"/>
</dbReference>
<dbReference type="RefSeq" id="XP_453872.1">
    <property type="nucleotide sequence ID" value="XM_453872.1"/>
</dbReference>
<dbReference type="SMR" id="Q6CQB7"/>
<dbReference type="FunCoup" id="Q6CQB7">
    <property type="interactions" value="112"/>
</dbReference>
<dbReference type="STRING" id="284590.Q6CQB7"/>
<dbReference type="PaxDb" id="284590-Q6CQB7"/>
<dbReference type="KEGG" id="kla:KLLA0_D18326g"/>
<dbReference type="eggNOG" id="ENOG502S4IW">
    <property type="taxonomic scope" value="Eukaryota"/>
</dbReference>
<dbReference type="HOGENOM" id="CLU_983745_0_0_1"/>
<dbReference type="InParanoid" id="Q6CQB7"/>
<dbReference type="Proteomes" id="UP000000598">
    <property type="component" value="Chromosome D"/>
</dbReference>
<dbReference type="GO" id="GO:0005737">
    <property type="term" value="C:cytoplasm"/>
    <property type="evidence" value="ECO:0007669"/>
    <property type="project" value="UniProtKB-SubCell"/>
</dbReference>
<dbReference type="GO" id="GO:0005634">
    <property type="term" value="C:nucleus"/>
    <property type="evidence" value="ECO:0007669"/>
    <property type="project" value="UniProtKB-SubCell"/>
</dbReference>
<protein>
    <recommendedName>
        <fullName>Protein ATC1/LIC4</fullName>
    </recommendedName>
</protein>
<sequence>MYQSMDLDDIKGHSHIINEDAEFDKTDSDNTFALELQKIIQQETNGGKVQDDVLAEAIATVDVDLPYLSNVSSPGLVYGTNKQSEHPQSHGGKDSDLTVEHILGDLQSGTEDDKEFTDRLNRLLCAPDSLKRGFSGDMEIDIPSNKKRKSVYETLSPPESMSPLSDKNDAQQNRDLNTHKDFSAMKRKINSQRMLKQVPLPPKLTNEFTMTQVAEMKKRVINTHKLILNFNFLKDGYARSCEELSKTVVKLKDSEFDRARLVKENQDLKRMVLEMSKQLNEKQ</sequence>
<evidence type="ECO:0000250" key="1"/>
<evidence type="ECO:0000256" key="2">
    <source>
        <dbReference type="SAM" id="MobiDB-lite"/>
    </source>
</evidence>
<gene>
    <name type="primary">ATC1</name>
    <name type="ordered locus">KLLA0D18326g</name>
</gene>
<organism>
    <name type="scientific">Kluyveromyces lactis (strain ATCC 8585 / CBS 2359 / DSM 70799 / NBRC 1267 / NRRL Y-1140 / WM37)</name>
    <name type="common">Yeast</name>
    <name type="synonym">Candida sphaerica</name>
    <dbReference type="NCBI Taxonomy" id="284590"/>
    <lineage>
        <taxon>Eukaryota</taxon>
        <taxon>Fungi</taxon>
        <taxon>Dikarya</taxon>
        <taxon>Ascomycota</taxon>
        <taxon>Saccharomycotina</taxon>
        <taxon>Saccharomycetes</taxon>
        <taxon>Saccharomycetales</taxon>
        <taxon>Saccharomycetaceae</taxon>
        <taxon>Kluyveromyces</taxon>
    </lineage>
</organism>